<proteinExistence type="inferred from homology"/>
<organism>
    <name type="scientific">Vibrio cholerae serotype O1 (strain ATCC 39315 / El Tor Inaba N16961)</name>
    <dbReference type="NCBI Taxonomy" id="243277"/>
    <lineage>
        <taxon>Bacteria</taxon>
        <taxon>Pseudomonadati</taxon>
        <taxon>Pseudomonadota</taxon>
        <taxon>Gammaproteobacteria</taxon>
        <taxon>Vibrionales</taxon>
        <taxon>Vibrionaceae</taxon>
        <taxon>Vibrio</taxon>
    </lineage>
</organism>
<dbReference type="EMBL" id="AE003852">
    <property type="protein sequence ID" value="AAF93464.1"/>
    <property type="molecule type" value="Genomic_DNA"/>
</dbReference>
<dbReference type="PIR" id="A82341">
    <property type="entry name" value="A82341"/>
</dbReference>
<dbReference type="RefSeq" id="NP_229945.1">
    <property type="nucleotide sequence ID" value="NC_002505.1"/>
</dbReference>
<dbReference type="RefSeq" id="WP_000462885.1">
    <property type="nucleotide sequence ID" value="NZ_LT906614.1"/>
</dbReference>
<dbReference type="SMR" id="P64127"/>
<dbReference type="STRING" id="243277.VC_0290"/>
<dbReference type="DNASU" id="2615013"/>
<dbReference type="EnsemblBacteria" id="AAF93464">
    <property type="protein sequence ID" value="AAF93464"/>
    <property type="gene ID" value="VC_0290"/>
</dbReference>
<dbReference type="GeneID" id="97171130"/>
<dbReference type="KEGG" id="vch:VC_0290"/>
<dbReference type="PATRIC" id="fig|243277.26.peg.272"/>
<dbReference type="eggNOG" id="COG2901">
    <property type="taxonomic scope" value="Bacteria"/>
</dbReference>
<dbReference type="HOGENOM" id="CLU_158040_3_0_6"/>
<dbReference type="PRO" id="PR:P64127"/>
<dbReference type="Proteomes" id="UP000000584">
    <property type="component" value="Chromosome 1"/>
</dbReference>
<dbReference type="GO" id="GO:0003700">
    <property type="term" value="F:DNA-binding transcription factor activity"/>
    <property type="evidence" value="ECO:0007669"/>
    <property type="project" value="UniProtKB-UniRule"/>
</dbReference>
<dbReference type="GO" id="GO:0043565">
    <property type="term" value="F:sequence-specific DNA binding"/>
    <property type="evidence" value="ECO:0000318"/>
    <property type="project" value="GO_Central"/>
</dbReference>
<dbReference type="FunFam" id="1.10.10.60:FF:000006">
    <property type="entry name" value="DNA-binding protein Fis"/>
    <property type="match status" value="1"/>
</dbReference>
<dbReference type="Gene3D" id="1.10.10.60">
    <property type="entry name" value="Homeodomain-like"/>
    <property type="match status" value="1"/>
</dbReference>
<dbReference type="HAMAP" id="MF_00166">
    <property type="entry name" value="DNA_binding_Fis"/>
    <property type="match status" value="1"/>
</dbReference>
<dbReference type="InterPro" id="IPR005412">
    <property type="entry name" value="Fis_DNA-bd"/>
</dbReference>
<dbReference type="InterPro" id="IPR009057">
    <property type="entry name" value="Homeodomain-like_sf"/>
</dbReference>
<dbReference type="InterPro" id="IPR002197">
    <property type="entry name" value="HTH_Fis"/>
</dbReference>
<dbReference type="InterPro" id="IPR050207">
    <property type="entry name" value="Trans_regulatory_Fis"/>
</dbReference>
<dbReference type="NCBIfam" id="NF001659">
    <property type="entry name" value="PRK00430.1"/>
    <property type="match status" value="1"/>
</dbReference>
<dbReference type="PANTHER" id="PTHR47918">
    <property type="entry name" value="DNA-BINDING PROTEIN FIS"/>
    <property type="match status" value="1"/>
</dbReference>
<dbReference type="PANTHER" id="PTHR47918:SF1">
    <property type="entry name" value="DNA-BINDING PROTEIN FIS"/>
    <property type="match status" value="1"/>
</dbReference>
<dbReference type="Pfam" id="PF02954">
    <property type="entry name" value="HTH_8"/>
    <property type="match status" value="1"/>
</dbReference>
<dbReference type="PIRSF" id="PIRSF002097">
    <property type="entry name" value="DNA-binding_Fis"/>
    <property type="match status" value="1"/>
</dbReference>
<dbReference type="PRINTS" id="PR01591">
    <property type="entry name" value="DNABINDNGFIS"/>
</dbReference>
<dbReference type="PRINTS" id="PR01590">
    <property type="entry name" value="HTHFIS"/>
</dbReference>
<dbReference type="SUPFAM" id="SSF46689">
    <property type="entry name" value="Homeodomain-like"/>
    <property type="match status" value="1"/>
</dbReference>
<reference key="1">
    <citation type="journal article" date="2000" name="Nature">
        <title>DNA sequence of both chromosomes of the cholera pathogen Vibrio cholerae.</title>
        <authorList>
            <person name="Heidelberg J.F."/>
            <person name="Eisen J.A."/>
            <person name="Nelson W.C."/>
            <person name="Clayton R.A."/>
            <person name="Gwinn M.L."/>
            <person name="Dodson R.J."/>
            <person name="Haft D.H."/>
            <person name="Hickey E.K."/>
            <person name="Peterson J.D."/>
            <person name="Umayam L.A."/>
            <person name="Gill S.R."/>
            <person name="Nelson K.E."/>
            <person name="Read T.D."/>
            <person name="Tettelin H."/>
            <person name="Richardson D.L."/>
            <person name="Ermolaeva M.D."/>
            <person name="Vamathevan J.J."/>
            <person name="Bass S."/>
            <person name="Qin H."/>
            <person name="Dragoi I."/>
            <person name="Sellers P."/>
            <person name="McDonald L.A."/>
            <person name="Utterback T.R."/>
            <person name="Fleischmann R.D."/>
            <person name="Nierman W.C."/>
            <person name="White O."/>
            <person name="Salzberg S.L."/>
            <person name="Smith H.O."/>
            <person name="Colwell R.R."/>
            <person name="Mekalanos J.J."/>
            <person name="Venter J.C."/>
            <person name="Fraser C.M."/>
        </authorList>
    </citation>
    <scope>NUCLEOTIDE SEQUENCE [LARGE SCALE GENOMIC DNA]</scope>
    <source>
        <strain>ATCC 39315 / El Tor Inaba N16961</strain>
    </source>
</reference>
<sequence length="98" mass="11112">MFEQNLTSEALTVTTVTSQDQITQKPLRDSVKASLKNYLAQLNGQEVTELYELVLAEVEQPLLDTIMQYTRGNQTRAATMMGINRGTLRKKLKKYGMN</sequence>
<protein>
    <recommendedName>
        <fullName evidence="1">DNA-binding protein Fis</fullName>
    </recommendedName>
</protein>
<keyword id="KW-0010">Activator</keyword>
<keyword id="KW-0238">DNA-binding</keyword>
<keyword id="KW-1185">Reference proteome</keyword>
<keyword id="KW-0804">Transcription</keyword>
<keyword id="KW-0805">Transcription regulation</keyword>
<name>FIS_VIBCH</name>
<evidence type="ECO:0000255" key="1">
    <source>
        <dbReference type="HAMAP-Rule" id="MF_00166"/>
    </source>
</evidence>
<comment type="function">
    <text evidence="1">Activates ribosomal RNA transcription. Plays a direct role in upstream activation of rRNA promoters.</text>
</comment>
<comment type="subunit">
    <text evidence="1">Homodimer.</text>
</comment>
<comment type="similarity">
    <text evidence="1">Belongs to the transcriptional regulatory Fis family.</text>
</comment>
<accession>P64127</accession>
<accession>Q9KV67</accession>
<feature type="chain" id="PRO_0000203898" description="DNA-binding protein Fis">
    <location>
        <begin position="1"/>
        <end position="98"/>
    </location>
</feature>
<feature type="DNA-binding region" description="H-T-H motif" evidence="1">
    <location>
        <begin position="74"/>
        <end position="93"/>
    </location>
</feature>
<gene>
    <name evidence="1" type="primary">fis</name>
    <name type="ordered locus">VC_0290</name>
</gene>